<proteinExistence type="inferred from homology"/>
<dbReference type="EC" id="2.7.11.1"/>
<dbReference type="EMBL" id="AC006067">
    <property type="protein sequence ID" value="AAD15470.1"/>
    <property type="molecule type" value="Genomic_DNA"/>
</dbReference>
<dbReference type="EMBL" id="CP002685">
    <property type="status" value="NOT_ANNOTATED_CDS"/>
    <property type="molecule type" value="Genomic_DNA"/>
</dbReference>
<dbReference type="PIR" id="C84517">
    <property type="entry name" value="C84517"/>
</dbReference>
<dbReference type="SMR" id="Q9ZQQ7"/>
<dbReference type="STRING" id="3702.Q9ZQQ7"/>
<dbReference type="GlyGen" id="Q9ZQQ7">
    <property type="glycosylation" value="10 sites"/>
</dbReference>
<dbReference type="PaxDb" id="3702-AT2G14440.1"/>
<dbReference type="ProteomicsDB" id="242990"/>
<dbReference type="Araport" id="AT2G14440"/>
<dbReference type="TAIR" id="AT2G14440"/>
<dbReference type="eggNOG" id="ENOG502QQCZ">
    <property type="taxonomic scope" value="Eukaryota"/>
</dbReference>
<dbReference type="HOGENOM" id="CLU_000288_41_1_1"/>
<dbReference type="InParanoid" id="Q9ZQQ7"/>
<dbReference type="PhylomeDB" id="Q9ZQQ7"/>
<dbReference type="PRO" id="PR:Q9ZQQ7"/>
<dbReference type="Proteomes" id="UP000006548">
    <property type="component" value="Chromosome 2"/>
</dbReference>
<dbReference type="ExpressionAtlas" id="Q9ZQQ7">
    <property type="expression patterns" value="baseline and differential"/>
</dbReference>
<dbReference type="GO" id="GO:0005886">
    <property type="term" value="C:plasma membrane"/>
    <property type="evidence" value="ECO:0007669"/>
    <property type="project" value="UniProtKB-SubCell"/>
</dbReference>
<dbReference type="GO" id="GO:0005524">
    <property type="term" value="F:ATP binding"/>
    <property type="evidence" value="ECO:0007669"/>
    <property type="project" value="UniProtKB-KW"/>
</dbReference>
<dbReference type="GO" id="GO:0106310">
    <property type="term" value="F:protein serine kinase activity"/>
    <property type="evidence" value="ECO:0007669"/>
    <property type="project" value="RHEA"/>
</dbReference>
<dbReference type="GO" id="GO:0004674">
    <property type="term" value="F:protein serine/threonine kinase activity"/>
    <property type="evidence" value="ECO:0007669"/>
    <property type="project" value="UniProtKB-KW"/>
</dbReference>
<dbReference type="CDD" id="cd14066">
    <property type="entry name" value="STKc_IRAK"/>
    <property type="match status" value="1"/>
</dbReference>
<dbReference type="FunFam" id="3.80.10.10:FF:000129">
    <property type="entry name" value="Leucine-rich repeat receptor-like kinase"/>
    <property type="match status" value="1"/>
</dbReference>
<dbReference type="FunFam" id="3.30.200.20:FF:000394">
    <property type="entry name" value="Leucine-rich repeat receptor-like protein kinase"/>
    <property type="match status" value="1"/>
</dbReference>
<dbReference type="FunFam" id="1.10.510.10:FF:000146">
    <property type="entry name" value="LRR receptor-like serine/threonine-protein kinase IOS1"/>
    <property type="match status" value="1"/>
</dbReference>
<dbReference type="Gene3D" id="3.30.200.20">
    <property type="entry name" value="Phosphorylase Kinase, domain 1"/>
    <property type="match status" value="1"/>
</dbReference>
<dbReference type="Gene3D" id="3.80.10.10">
    <property type="entry name" value="Ribonuclease Inhibitor"/>
    <property type="match status" value="1"/>
</dbReference>
<dbReference type="Gene3D" id="1.10.510.10">
    <property type="entry name" value="Transferase(Phosphotransferase) domain 1"/>
    <property type="match status" value="1"/>
</dbReference>
<dbReference type="InterPro" id="IPR011009">
    <property type="entry name" value="Kinase-like_dom_sf"/>
</dbReference>
<dbReference type="InterPro" id="IPR001611">
    <property type="entry name" value="Leu-rich_rpt"/>
</dbReference>
<dbReference type="InterPro" id="IPR032675">
    <property type="entry name" value="LRR_dom_sf"/>
</dbReference>
<dbReference type="InterPro" id="IPR024788">
    <property type="entry name" value="Malectin-like_Carb-bd_dom"/>
</dbReference>
<dbReference type="InterPro" id="IPR000719">
    <property type="entry name" value="Prot_kinase_dom"/>
</dbReference>
<dbReference type="InterPro" id="IPR017441">
    <property type="entry name" value="Protein_kinase_ATP_BS"/>
</dbReference>
<dbReference type="InterPro" id="IPR001245">
    <property type="entry name" value="Ser-Thr/Tyr_kinase_cat_dom"/>
</dbReference>
<dbReference type="InterPro" id="IPR008271">
    <property type="entry name" value="Ser/Thr_kinase_AS"/>
</dbReference>
<dbReference type="PANTHER" id="PTHR45631:SF151">
    <property type="entry name" value="MALECTIN-LIKE DOMAIN-CONTAINING PROTEIN"/>
    <property type="match status" value="1"/>
</dbReference>
<dbReference type="PANTHER" id="PTHR45631">
    <property type="entry name" value="OS07G0107800 PROTEIN-RELATED"/>
    <property type="match status" value="1"/>
</dbReference>
<dbReference type="Pfam" id="PF13855">
    <property type="entry name" value="LRR_8"/>
    <property type="match status" value="1"/>
</dbReference>
<dbReference type="Pfam" id="PF12819">
    <property type="entry name" value="Malectin_like"/>
    <property type="match status" value="1"/>
</dbReference>
<dbReference type="Pfam" id="PF07714">
    <property type="entry name" value="PK_Tyr_Ser-Thr"/>
    <property type="match status" value="1"/>
</dbReference>
<dbReference type="PRINTS" id="PR00019">
    <property type="entry name" value="LEURICHRPT"/>
</dbReference>
<dbReference type="SMART" id="SM00220">
    <property type="entry name" value="S_TKc"/>
    <property type="match status" value="1"/>
</dbReference>
<dbReference type="SUPFAM" id="SSF52058">
    <property type="entry name" value="L domain-like"/>
    <property type="match status" value="1"/>
</dbReference>
<dbReference type="SUPFAM" id="SSF56112">
    <property type="entry name" value="Protein kinase-like (PK-like)"/>
    <property type="match status" value="1"/>
</dbReference>
<dbReference type="PROSITE" id="PS51450">
    <property type="entry name" value="LRR"/>
    <property type="match status" value="2"/>
</dbReference>
<dbReference type="PROSITE" id="PS00107">
    <property type="entry name" value="PROTEIN_KINASE_ATP"/>
    <property type="match status" value="1"/>
</dbReference>
<dbReference type="PROSITE" id="PS50011">
    <property type="entry name" value="PROTEIN_KINASE_DOM"/>
    <property type="match status" value="1"/>
</dbReference>
<dbReference type="PROSITE" id="PS00108">
    <property type="entry name" value="PROTEIN_KINASE_ST"/>
    <property type="match status" value="1"/>
</dbReference>
<feature type="signal peptide" evidence="3">
    <location>
        <begin position="1"/>
        <end position="23"/>
    </location>
</feature>
<feature type="chain" id="PRO_0000403336" description="Putative leucine-rich repeat receptor-like serine/threonine-protein kinase At2g14440">
    <location>
        <begin position="24"/>
        <end position="886"/>
    </location>
</feature>
<feature type="topological domain" description="Extracellular" evidence="3">
    <location>
        <begin position="24"/>
        <end position="528"/>
    </location>
</feature>
<feature type="transmembrane region" description="Helical" evidence="3">
    <location>
        <begin position="529"/>
        <end position="549"/>
    </location>
</feature>
<feature type="topological domain" description="Cytoplasmic" evidence="3">
    <location>
        <begin position="550"/>
        <end position="886"/>
    </location>
</feature>
<feature type="repeat" description="LRR 1">
    <location>
        <begin position="413"/>
        <end position="436"/>
    </location>
</feature>
<feature type="repeat" description="LRR 2">
    <location>
        <begin position="437"/>
        <end position="460"/>
    </location>
</feature>
<feature type="repeat" description="LRR 3">
    <location>
        <begin position="461"/>
        <end position="483"/>
    </location>
</feature>
<feature type="repeat" description="LRR 4">
    <location>
        <begin position="485"/>
        <end position="507"/>
    </location>
</feature>
<feature type="domain" description="Protein kinase" evidence="4">
    <location>
        <begin position="581"/>
        <end position="850"/>
    </location>
</feature>
<feature type="region of interest" description="Disordered" evidence="6">
    <location>
        <begin position="863"/>
        <end position="886"/>
    </location>
</feature>
<feature type="compositionally biased region" description="Polar residues" evidence="6">
    <location>
        <begin position="865"/>
        <end position="878"/>
    </location>
</feature>
<feature type="active site" description="Proton acceptor" evidence="4 5">
    <location>
        <position position="705"/>
    </location>
</feature>
<feature type="binding site" evidence="4">
    <location>
        <begin position="587"/>
        <end position="595"/>
    </location>
    <ligand>
        <name>ATP</name>
        <dbReference type="ChEBI" id="CHEBI:30616"/>
    </ligand>
</feature>
<feature type="binding site" evidence="4">
    <location>
        <position position="608"/>
    </location>
    <ligand>
        <name>ATP</name>
        <dbReference type="ChEBI" id="CHEBI:30616"/>
    </ligand>
</feature>
<feature type="modified residue" description="Phosphotyrosine" evidence="2">
    <location>
        <position position="653"/>
    </location>
</feature>
<feature type="modified residue" description="Phosphoserine" evidence="2">
    <location>
        <position position="739"/>
    </location>
</feature>
<feature type="modified residue" description="Phosphothreonine" evidence="2">
    <location>
        <position position="740"/>
    </location>
</feature>
<feature type="modified residue" description="Phosphothreonine" evidence="2">
    <location>
        <position position="745"/>
    </location>
</feature>
<feature type="modified residue" description="Phosphotyrosine" evidence="2">
    <location>
        <position position="753"/>
    </location>
</feature>
<feature type="glycosylation site" description="N-linked (GlcNAc...) asparagine" evidence="3">
    <location>
        <position position="49"/>
    </location>
</feature>
<feature type="glycosylation site" description="N-linked (GlcNAc...) asparagine" evidence="3">
    <location>
        <position position="69"/>
    </location>
</feature>
<feature type="glycosylation site" description="N-linked (GlcNAc...) asparagine" evidence="3">
    <location>
        <position position="232"/>
    </location>
</feature>
<feature type="glycosylation site" description="N-linked (GlcNAc...) asparagine" evidence="3">
    <location>
        <position position="236"/>
    </location>
</feature>
<feature type="glycosylation site" description="N-linked (GlcNAc...) asparagine" evidence="3">
    <location>
        <position position="259"/>
    </location>
</feature>
<feature type="glycosylation site" description="N-linked (GlcNAc...) asparagine" evidence="3">
    <location>
        <position position="292"/>
    </location>
</feature>
<feature type="glycosylation site" description="N-linked (GlcNAc...) asparagine" evidence="3">
    <location>
        <position position="434"/>
    </location>
</feature>
<feature type="glycosylation site" description="N-linked (GlcNAc...) asparagine" evidence="3">
    <location>
        <position position="447"/>
    </location>
</feature>
<feature type="glycosylation site" description="N-linked (GlcNAc...) asparagine" evidence="3">
    <location>
        <position position="458"/>
    </location>
</feature>
<feature type="glycosylation site" description="N-linked (GlcNAc...) asparagine" evidence="3">
    <location>
        <position position="471"/>
    </location>
</feature>
<reference key="1">
    <citation type="journal article" date="1999" name="Nature">
        <title>Sequence and analysis of chromosome 2 of the plant Arabidopsis thaliana.</title>
        <authorList>
            <person name="Lin X."/>
            <person name="Kaul S."/>
            <person name="Rounsley S.D."/>
            <person name="Shea T.P."/>
            <person name="Benito M.-I."/>
            <person name="Town C.D."/>
            <person name="Fujii C.Y."/>
            <person name="Mason T.M."/>
            <person name="Bowman C.L."/>
            <person name="Barnstead M.E."/>
            <person name="Feldblyum T.V."/>
            <person name="Buell C.R."/>
            <person name="Ketchum K.A."/>
            <person name="Lee J.J."/>
            <person name="Ronning C.M."/>
            <person name="Koo H.L."/>
            <person name="Moffat K.S."/>
            <person name="Cronin L.A."/>
            <person name="Shen M."/>
            <person name="Pai G."/>
            <person name="Van Aken S."/>
            <person name="Umayam L."/>
            <person name="Tallon L.J."/>
            <person name="Gill J.E."/>
            <person name="Adams M.D."/>
            <person name="Carrera A.J."/>
            <person name="Creasy T.H."/>
            <person name="Goodman H.M."/>
            <person name="Somerville C.R."/>
            <person name="Copenhaver G.P."/>
            <person name="Preuss D."/>
            <person name="Nierman W.C."/>
            <person name="White O."/>
            <person name="Eisen J.A."/>
            <person name="Salzberg S.L."/>
            <person name="Fraser C.M."/>
            <person name="Venter J.C."/>
        </authorList>
    </citation>
    <scope>NUCLEOTIDE SEQUENCE [LARGE SCALE GENOMIC DNA]</scope>
    <source>
        <strain>cv. Columbia</strain>
    </source>
</reference>
<reference key="2">
    <citation type="journal article" date="2017" name="Plant J.">
        <title>Araport11: a complete reannotation of the Arabidopsis thaliana reference genome.</title>
        <authorList>
            <person name="Cheng C.Y."/>
            <person name="Krishnakumar V."/>
            <person name="Chan A.P."/>
            <person name="Thibaud-Nissen F."/>
            <person name="Schobel S."/>
            <person name="Town C.D."/>
        </authorList>
    </citation>
    <scope>GENOME REANNOTATION</scope>
    <source>
        <strain>cv. Columbia</strain>
    </source>
</reference>
<accession>Q9ZQQ7</accession>
<keyword id="KW-0067">ATP-binding</keyword>
<keyword id="KW-1003">Cell membrane</keyword>
<keyword id="KW-0325">Glycoprotein</keyword>
<keyword id="KW-0418">Kinase</keyword>
<keyword id="KW-0433">Leucine-rich repeat</keyword>
<keyword id="KW-0472">Membrane</keyword>
<keyword id="KW-0547">Nucleotide-binding</keyword>
<keyword id="KW-0597">Phosphoprotein</keyword>
<keyword id="KW-0675">Receptor</keyword>
<keyword id="KW-1185">Reference proteome</keyword>
<keyword id="KW-0677">Repeat</keyword>
<keyword id="KW-0723">Serine/threonine-protein kinase</keyword>
<keyword id="KW-0732">Signal</keyword>
<keyword id="KW-0808">Transferase</keyword>
<keyword id="KW-0812">Transmembrane</keyword>
<keyword id="KW-1133">Transmembrane helix</keyword>
<protein>
    <recommendedName>
        <fullName>Putative leucine-rich repeat receptor-like serine/threonine-protein kinase At2g14440</fullName>
        <ecNumber>2.7.11.1</ecNumber>
    </recommendedName>
</protein>
<name>Y2144_ARATH</name>
<comment type="catalytic activity">
    <reaction>
        <text>L-seryl-[protein] + ATP = O-phospho-L-seryl-[protein] + ADP + H(+)</text>
        <dbReference type="Rhea" id="RHEA:17989"/>
        <dbReference type="Rhea" id="RHEA-COMP:9863"/>
        <dbReference type="Rhea" id="RHEA-COMP:11604"/>
        <dbReference type="ChEBI" id="CHEBI:15378"/>
        <dbReference type="ChEBI" id="CHEBI:29999"/>
        <dbReference type="ChEBI" id="CHEBI:30616"/>
        <dbReference type="ChEBI" id="CHEBI:83421"/>
        <dbReference type="ChEBI" id="CHEBI:456216"/>
        <dbReference type="EC" id="2.7.11.1"/>
    </reaction>
</comment>
<comment type="catalytic activity">
    <reaction>
        <text>L-threonyl-[protein] + ATP = O-phospho-L-threonyl-[protein] + ADP + H(+)</text>
        <dbReference type="Rhea" id="RHEA:46608"/>
        <dbReference type="Rhea" id="RHEA-COMP:11060"/>
        <dbReference type="Rhea" id="RHEA-COMP:11605"/>
        <dbReference type="ChEBI" id="CHEBI:15378"/>
        <dbReference type="ChEBI" id="CHEBI:30013"/>
        <dbReference type="ChEBI" id="CHEBI:30616"/>
        <dbReference type="ChEBI" id="CHEBI:61977"/>
        <dbReference type="ChEBI" id="CHEBI:456216"/>
        <dbReference type="EC" id="2.7.11.1"/>
    </reaction>
</comment>
<comment type="subcellular location">
    <subcellularLocation>
        <location evidence="1">Cell membrane</location>
        <topology evidence="1">Single-pass type I membrane protein</topology>
    </subcellularLocation>
</comment>
<comment type="similarity">
    <text evidence="4">Belongs to the protein kinase superfamily. Ser/Thr protein kinase family.</text>
</comment>
<gene>
    <name type="ordered locus">At2g14440</name>
    <name type="ORF">T13P21.18</name>
</gene>
<organism>
    <name type="scientific">Arabidopsis thaliana</name>
    <name type="common">Mouse-ear cress</name>
    <dbReference type="NCBI Taxonomy" id="3702"/>
    <lineage>
        <taxon>Eukaryota</taxon>
        <taxon>Viridiplantae</taxon>
        <taxon>Streptophyta</taxon>
        <taxon>Embryophyta</taxon>
        <taxon>Tracheophyta</taxon>
        <taxon>Spermatophyta</taxon>
        <taxon>Magnoliopsida</taxon>
        <taxon>eudicotyledons</taxon>
        <taxon>Gunneridae</taxon>
        <taxon>Pentapetalae</taxon>
        <taxon>rosids</taxon>
        <taxon>malvids</taxon>
        <taxon>Brassicales</taxon>
        <taxon>Brassicaceae</taxon>
        <taxon>Camelineae</taxon>
        <taxon>Arabidopsis</taxon>
    </lineage>
</organism>
<evidence type="ECO:0000250" key="1"/>
<evidence type="ECO:0000250" key="2">
    <source>
        <dbReference type="UniProtKB" id="O48814"/>
    </source>
</evidence>
<evidence type="ECO:0000255" key="3"/>
<evidence type="ECO:0000255" key="4">
    <source>
        <dbReference type="PROSITE-ProRule" id="PRU00159"/>
    </source>
</evidence>
<evidence type="ECO:0000255" key="5">
    <source>
        <dbReference type="PROSITE-ProRule" id="PRU10027"/>
    </source>
</evidence>
<evidence type="ECO:0000256" key="6">
    <source>
        <dbReference type="SAM" id="MobiDB-lite"/>
    </source>
</evidence>
<sequence>METRSKLMLLACATFSIISLVKSQNQQGFISLYCGLPSNESPYIEPLTNLTYISDVNFVRGGKTGNIKNNSDIDFTSRPYKVLRYFPEGIRNCYSLSVKQGTKYLIRTLFFYGNYDGLNTSPRFDLFLGPNIWTSVDVQKVDGGDGVIEEIIHVTRCNILDICLVKTGTTTPMISAIELRPLRYDTYTARTGSLKKILHFYFTNSGKEVRYPEDVYDRVWIPHSQPEWTQINTTRNVSGFSDGYNPPQDVIKTASIPTNVSEPLTFTWMSESSDDETYAYLYFAEIQQLKANETRQFKILVNGVYYIDYIPRKFEAETLITPAALKCGGGVCRVQLSKTPKSTLPPQMNAIEIFSVIQFPQSDTNTDEVIAIKNIQSTYKVSRISWQGDPCVPIQFSWMGVSCNVIDISTPPRIISLDLSSSGLTGVITPSIQNLTMLRELDLSNNNLTGVIPPSLQNLTMLRELDLSNNNLTGEVPEFLATIKPLLVIHLRGNNLRGSVPQALQDRENNDGLKLLRGKHQPKSWLVAIVASISCVAVTIIVLVLIFIFRRRKSSTRKVIRPSLEMKNRRFKYSEVKEMTNNFEVVLGKGGFGVVYHGFLNNEQVAVKVLSQSSTQGYKEFKTEVELLLRVHHVNLVSLVGYCDKGNDLALIYEFMENGNLKEHLSGKRGGPVLNWPGRLKIAIESALGIEYLHIGCKPPMVHRDVKSTNILLGLRFEAKLADFGLSRSFLVGSQTHVSTNVAGTLGYLDPEYYQKNWLTEKSDVYSFGIVLLEIITGQPVIEQSRDKSYIVEWAKSMLANGDIESIMDRNLHQDYDTSSSWKALELAMLCINPSSTLRPNMTRVAHELNECLEIYNLTKRRSQDQNSSKSSGHTVTFISDIPSAR</sequence>